<keyword id="KW-0456">Lyase</keyword>
<keyword id="KW-0460">Magnesium</keyword>
<keyword id="KW-0464">Manganese</keyword>
<keyword id="KW-0479">Metal-binding</keyword>
<keyword id="KW-0686">Riboflavin biosynthesis</keyword>
<feature type="chain" id="PRO_1000040632" description="3,4-dihydroxy-2-butanone 4-phosphate synthase">
    <location>
        <begin position="1"/>
        <end position="217"/>
    </location>
</feature>
<feature type="binding site" evidence="1">
    <location>
        <begin position="37"/>
        <end position="38"/>
    </location>
    <ligand>
        <name>D-ribulose 5-phosphate</name>
        <dbReference type="ChEBI" id="CHEBI:58121"/>
    </ligand>
</feature>
<feature type="binding site" evidence="1">
    <location>
        <position position="38"/>
    </location>
    <ligand>
        <name>Mg(2+)</name>
        <dbReference type="ChEBI" id="CHEBI:18420"/>
        <label>1</label>
    </ligand>
</feature>
<feature type="binding site" evidence="1">
    <location>
        <position position="38"/>
    </location>
    <ligand>
        <name>Mg(2+)</name>
        <dbReference type="ChEBI" id="CHEBI:18420"/>
        <label>2</label>
    </ligand>
</feature>
<feature type="binding site" evidence="1">
    <location>
        <position position="42"/>
    </location>
    <ligand>
        <name>D-ribulose 5-phosphate</name>
        <dbReference type="ChEBI" id="CHEBI:58121"/>
    </ligand>
</feature>
<feature type="binding site" evidence="1">
    <location>
        <begin position="150"/>
        <end position="154"/>
    </location>
    <ligand>
        <name>D-ribulose 5-phosphate</name>
        <dbReference type="ChEBI" id="CHEBI:58121"/>
    </ligand>
</feature>
<feature type="binding site" evidence="1">
    <location>
        <position position="153"/>
    </location>
    <ligand>
        <name>Mg(2+)</name>
        <dbReference type="ChEBI" id="CHEBI:18420"/>
        <label>2</label>
    </ligand>
</feature>
<feature type="binding site" evidence="1">
    <location>
        <position position="174"/>
    </location>
    <ligand>
        <name>D-ribulose 5-phosphate</name>
        <dbReference type="ChEBI" id="CHEBI:58121"/>
    </ligand>
</feature>
<feature type="site" description="Essential for catalytic activity" evidence="1">
    <location>
        <position position="136"/>
    </location>
</feature>
<feature type="site" description="Essential for catalytic activity" evidence="1">
    <location>
        <position position="174"/>
    </location>
</feature>
<comment type="function">
    <text evidence="1">Catalyzes the conversion of D-ribulose 5-phosphate to formate and 3,4-dihydroxy-2-butanone 4-phosphate.</text>
</comment>
<comment type="catalytic activity">
    <reaction evidence="1">
        <text>D-ribulose 5-phosphate = (2S)-2-hydroxy-3-oxobutyl phosphate + formate + H(+)</text>
        <dbReference type="Rhea" id="RHEA:18457"/>
        <dbReference type="ChEBI" id="CHEBI:15378"/>
        <dbReference type="ChEBI" id="CHEBI:15740"/>
        <dbReference type="ChEBI" id="CHEBI:58121"/>
        <dbReference type="ChEBI" id="CHEBI:58830"/>
        <dbReference type="EC" id="4.1.99.12"/>
    </reaction>
</comment>
<comment type="cofactor">
    <cofactor evidence="1">
        <name>Mg(2+)</name>
        <dbReference type="ChEBI" id="CHEBI:18420"/>
    </cofactor>
    <cofactor evidence="1">
        <name>Mn(2+)</name>
        <dbReference type="ChEBI" id="CHEBI:29035"/>
    </cofactor>
    <text evidence="1">Binds 2 divalent metal cations per subunit. Magnesium or manganese.</text>
</comment>
<comment type="pathway">
    <text evidence="1">Cofactor biosynthesis; riboflavin biosynthesis; 2-hydroxy-3-oxobutyl phosphate from D-ribulose 5-phosphate: step 1/1.</text>
</comment>
<comment type="subunit">
    <text evidence="1">Homodimer.</text>
</comment>
<comment type="similarity">
    <text evidence="1">Belongs to the DHBP synthase family.</text>
</comment>
<reference key="1">
    <citation type="submission" date="2006-08" db="EMBL/GenBank/DDBJ databases">
        <title>Complete sequence of chromosome 1 of Shewanella sp. MR-7.</title>
        <authorList>
            <person name="Copeland A."/>
            <person name="Lucas S."/>
            <person name="Lapidus A."/>
            <person name="Barry K."/>
            <person name="Detter J.C."/>
            <person name="Glavina del Rio T."/>
            <person name="Hammon N."/>
            <person name="Israni S."/>
            <person name="Dalin E."/>
            <person name="Tice H."/>
            <person name="Pitluck S."/>
            <person name="Kiss H."/>
            <person name="Brettin T."/>
            <person name="Bruce D."/>
            <person name="Han C."/>
            <person name="Tapia R."/>
            <person name="Gilna P."/>
            <person name="Schmutz J."/>
            <person name="Larimer F."/>
            <person name="Land M."/>
            <person name="Hauser L."/>
            <person name="Kyrpides N."/>
            <person name="Mikhailova N."/>
            <person name="Nealson K."/>
            <person name="Konstantinidis K."/>
            <person name="Klappenbach J."/>
            <person name="Tiedje J."/>
            <person name="Richardson P."/>
        </authorList>
    </citation>
    <scope>NUCLEOTIDE SEQUENCE [LARGE SCALE GENOMIC DNA]</scope>
    <source>
        <strain>MR-7</strain>
    </source>
</reference>
<gene>
    <name evidence="1" type="primary">ribB</name>
    <name type="ordered locus">Shewmr7_0129</name>
</gene>
<accession>Q0I0H0</accession>
<evidence type="ECO:0000255" key="1">
    <source>
        <dbReference type="HAMAP-Rule" id="MF_00180"/>
    </source>
</evidence>
<dbReference type="EC" id="4.1.99.12" evidence="1"/>
<dbReference type="EMBL" id="CP000444">
    <property type="protein sequence ID" value="ABI41135.1"/>
    <property type="molecule type" value="Genomic_DNA"/>
</dbReference>
<dbReference type="SMR" id="Q0I0H0"/>
<dbReference type="KEGG" id="shm:Shewmr7_0129"/>
<dbReference type="HOGENOM" id="CLU_020273_3_0_6"/>
<dbReference type="UniPathway" id="UPA00275">
    <property type="reaction ID" value="UER00399"/>
</dbReference>
<dbReference type="GO" id="GO:0005829">
    <property type="term" value="C:cytosol"/>
    <property type="evidence" value="ECO:0007669"/>
    <property type="project" value="TreeGrafter"/>
</dbReference>
<dbReference type="GO" id="GO:0008686">
    <property type="term" value="F:3,4-dihydroxy-2-butanone-4-phosphate synthase activity"/>
    <property type="evidence" value="ECO:0007669"/>
    <property type="project" value="UniProtKB-UniRule"/>
</dbReference>
<dbReference type="GO" id="GO:0000287">
    <property type="term" value="F:magnesium ion binding"/>
    <property type="evidence" value="ECO:0007669"/>
    <property type="project" value="UniProtKB-UniRule"/>
</dbReference>
<dbReference type="GO" id="GO:0030145">
    <property type="term" value="F:manganese ion binding"/>
    <property type="evidence" value="ECO:0007669"/>
    <property type="project" value="UniProtKB-UniRule"/>
</dbReference>
<dbReference type="GO" id="GO:0009231">
    <property type="term" value="P:riboflavin biosynthetic process"/>
    <property type="evidence" value="ECO:0007669"/>
    <property type="project" value="UniProtKB-UniRule"/>
</dbReference>
<dbReference type="FunFam" id="3.90.870.10:FF:000002">
    <property type="entry name" value="3,4-dihydroxy-2-butanone 4-phosphate synthase"/>
    <property type="match status" value="1"/>
</dbReference>
<dbReference type="Gene3D" id="3.90.870.10">
    <property type="entry name" value="DHBP synthase"/>
    <property type="match status" value="1"/>
</dbReference>
<dbReference type="HAMAP" id="MF_00180">
    <property type="entry name" value="RibB"/>
    <property type="match status" value="1"/>
</dbReference>
<dbReference type="InterPro" id="IPR017945">
    <property type="entry name" value="DHBP_synth_RibB-like_a/b_dom"/>
</dbReference>
<dbReference type="InterPro" id="IPR000422">
    <property type="entry name" value="DHBP_synthase_RibB"/>
</dbReference>
<dbReference type="NCBIfam" id="TIGR00506">
    <property type="entry name" value="ribB"/>
    <property type="match status" value="1"/>
</dbReference>
<dbReference type="PANTHER" id="PTHR21327:SF38">
    <property type="entry name" value="3,4-DIHYDROXY-2-BUTANONE 4-PHOSPHATE SYNTHASE"/>
    <property type="match status" value="1"/>
</dbReference>
<dbReference type="PANTHER" id="PTHR21327">
    <property type="entry name" value="GTP CYCLOHYDROLASE II-RELATED"/>
    <property type="match status" value="1"/>
</dbReference>
<dbReference type="Pfam" id="PF00926">
    <property type="entry name" value="DHBP_synthase"/>
    <property type="match status" value="1"/>
</dbReference>
<dbReference type="SUPFAM" id="SSF55821">
    <property type="entry name" value="YrdC/RibB"/>
    <property type="match status" value="1"/>
</dbReference>
<protein>
    <recommendedName>
        <fullName evidence="1">3,4-dihydroxy-2-butanone 4-phosphate synthase</fullName>
        <shortName evidence="1">DHBP synthase</shortName>
        <ecNumber evidence="1">4.1.99.12</ecNumber>
    </recommendedName>
</protein>
<name>RIBB_SHESR</name>
<sequence length="217" mass="22949">MNQSLLAPFGTAIERVEAGLEALRQGQGVLVVDDEDRENEGDLIFAAESLTNAQMAMLIRECSGIVCLCLPDEKVKALELPPMVENNSSQYGTAFTVSIEAKVGVTTGVSAADRVTTIKAAIADNAKPSDLARPGHVYPLRAQPGGVLTRRGHTEGTIDLMQLAGLKPAGVLCEVTNPDGTMARLPEIIAFGAAHNMPVLTIEDIVVYRKSLLANVG</sequence>
<proteinExistence type="inferred from homology"/>
<organism>
    <name type="scientific">Shewanella sp. (strain MR-7)</name>
    <dbReference type="NCBI Taxonomy" id="60481"/>
    <lineage>
        <taxon>Bacteria</taxon>
        <taxon>Pseudomonadati</taxon>
        <taxon>Pseudomonadota</taxon>
        <taxon>Gammaproteobacteria</taxon>
        <taxon>Alteromonadales</taxon>
        <taxon>Shewanellaceae</taxon>
        <taxon>Shewanella</taxon>
    </lineage>
</organism>